<feature type="chain" id="PRO_1000142077" description="Large ribosomal subunit protein uL4">
    <location>
        <begin position="1"/>
        <end position="207"/>
    </location>
</feature>
<feature type="region of interest" description="Disordered" evidence="2">
    <location>
        <begin position="45"/>
        <end position="89"/>
    </location>
</feature>
<feature type="compositionally biased region" description="Basic residues" evidence="2">
    <location>
        <begin position="60"/>
        <end position="71"/>
    </location>
</feature>
<gene>
    <name evidence="1" type="primary">rplD</name>
    <name type="ordered locus">BCAH820_0123</name>
</gene>
<keyword id="KW-0687">Ribonucleoprotein</keyword>
<keyword id="KW-0689">Ribosomal protein</keyword>
<keyword id="KW-0694">RNA-binding</keyword>
<keyword id="KW-0699">rRNA-binding</keyword>
<reference key="1">
    <citation type="submission" date="2008-10" db="EMBL/GenBank/DDBJ databases">
        <title>Genome sequence of Bacillus cereus AH820.</title>
        <authorList>
            <person name="Dodson R.J."/>
            <person name="Durkin A.S."/>
            <person name="Rosovitz M.J."/>
            <person name="Rasko D.A."/>
            <person name="Hoffmaster A."/>
            <person name="Ravel J."/>
            <person name="Sutton G."/>
        </authorList>
    </citation>
    <scope>NUCLEOTIDE SEQUENCE [LARGE SCALE GENOMIC DNA]</scope>
    <source>
        <strain>AH820</strain>
    </source>
</reference>
<protein>
    <recommendedName>
        <fullName evidence="1">Large ribosomal subunit protein uL4</fullName>
    </recommendedName>
    <alternativeName>
        <fullName evidence="3">50S ribosomal protein L4</fullName>
    </alternativeName>
</protein>
<comment type="function">
    <text evidence="1">One of the primary rRNA binding proteins, this protein initially binds near the 5'-end of the 23S rRNA. It is important during the early stages of 50S assembly. It makes multiple contacts with different domains of the 23S rRNA in the assembled 50S subunit and ribosome.</text>
</comment>
<comment type="function">
    <text evidence="1">Forms part of the polypeptide exit tunnel.</text>
</comment>
<comment type="subunit">
    <text evidence="1">Part of the 50S ribosomal subunit.</text>
</comment>
<comment type="similarity">
    <text evidence="1">Belongs to the universal ribosomal protein uL4 family.</text>
</comment>
<dbReference type="EMBL" id="CP001283">
    <property type="protein sequence ID" value="ACK91199.1"/>
    <property type="molecule type" value="Genomic_DNA"/>
</dbReference>
<dbReference type="RefSeq" id="WP_001127258.1">
    <property type="nucleotide sequence ID" value="NC_011773.1"/>
</dbReference>
<dbReference type="SMR" id="B7JKC0"/>
<dbReference type="GeneID" id="93010942"/>
<dbReference type="KEGG" id="bcu:BCAH820_0123"/>
<dbReference type="HOGENOM" id="CLU_041575_5_2_9"/>
<dbReference type="Proteomes" id="UP000001363">
    <property type="component" value="Chromosome"/>
</dbReference>
<dbReference type="GO" id="GO:1990904">
    <property type="term" value="C:ribonucleoprotein complex"/>
    <property type="evidence" value="ECO:0007669"/>
    <property type="project" value="UniProtKB-KW"/>
</dbReference>
<dbReference type="GO" id="GO:0005840">
    <property type="term" value="C:ribosome"/>
    <property type="evidence" value="ECO:0007669"/>
    <property type="project" value="UniProtKB-KW"/>
</dbReference>
<dbReference type="GO" id="GO:0019843">
    <property type="term" value="F:rRNA binding"/>
    <property type="evidence" value="ECO:0007669"/>
    <property type="project" value="UniProtKB-UniRule"/>
</dbReference>
<dbReference type="GO" id="GO:0003735">
    <property type="term" value="F:structural constituent of ribosome"/>
    <property type="evidence" value="ECO:0007669"/>
    <property type="project" value="InterPro"/>
</dbReference>
<dbReference type="GO" id="GO:0006412">
    <property type="term" value="P:translation"/>
    <property type="evidence" value="ECO:0007669"/>
    <property type="project" value="UniProtKB-UniRule"/>
</dbReference>
<dbReference type="FunFam" id="3.40.1370.10:FF:000003">
    <property type="entry name" value="50S ribosomal protein L4"/>
    <property type="match status" value="1"/>
</dbReference>
<dbReference type="Gene3D" id="3.40.1370.10">
    <property type="match status" value="1"/>
</dbReference>
<dbReference type="HAMAP" id="MF_01328_B">
    <property type="entry name" value="Ribosomal_uL4_B"/>
    <property type="match status" value="1"/>
</dbReference>
<dbReference type="InterPro" id="IPR002136">
    <property type="entry name" value="Ribosomal_uL4"/>
</dbReference>
<dbReference type="InterPro" id="IPR013005">
    <property type="entry name" value="Ribosomal_uL4-like"/>
</dbReference>
<dbReference type="InterPro" id="IPR023574">
    <property type="entry name" value="Ribosomal_uL4_dom_sf"/>
</dbReference>
<dbReference type="NCBIfam" id="TIGR03953">
    <property type="entry name" value="rplD_bact"/>
    <property type="match status" value="1"/>
</dbReference>
<dbReference type="PANTHER" id="PTHR10746">
    <property type="entry name" value="50S RIBOSOMAL PROTEIN L4"/>
    <property type="match status" value="1"/>
</dbReference>
<dbReference type="PANTHER" id="PTHR10746:SF6">
    <property type="entry name" value="LARGE RIBOSOMAL SUBUNIT PROTEIN UL4M"/>
    <property type="match status" value="1"/>
</dbReference>
<dbReference type="Pfam" id="PF00573">
    <property type="entry name" value="Ribosomal_L4"/>
    <property type="match status" value="1"/>
</dbReference>
<dbReference type="SUPFAM" id="SSF52166">
    <property type="entry name" value="Ribosomal protein L4"/>
    <property type="match status" value="1"/>
</dbReference>
<organism>
    <name type="scientific">Bacillus cereus (strain AH820)</name>
    <dbReference type="NCBI Taxonomy" id="405535"/>
    <lineage>
        <taxon>Bacteria</taxon>
        <taxon>Bacillati</taxon>
        <taxon>Bacillota</taxon>
        <taxon>Bacilli</taxon>
        <taxon>Bacillales</taxon>
        <taxon>Bacillaceae</taxon>
        <taxon>Bacillus</taxon>
        <taxon>Bacillus cereus group</taxon>
    </lineage>
</organism>
<sequence length="207" mass="22530">MPKVTVYNQTGSQVGEIELAEAIFGIEPNEAVLFEAVMMQRASLRQGTHKVKTRSEVRGGGRKPWRQKGTGRARQGSIRSPQWRGGGTVFGPTPRSYAYKLPKKVRRLAIKSALATKVVENNIVVLEDLVLNAPKTKDMLAVLKGLTVEKKALIVTADANESVELSARNIPGVTVITADGVNVLDVLHHDKLIMTKAAVEKVEEVLA</sequence>
<accession>B7JKC0</accession>
<proteinExistence type="inferred from homology"/>
<name>RL4_BACC0</name>
<evidence type="ECO:0000255" key="1">
    <source>
        <dbReference type="HAMAP-Rule" id="MF_01328"/>
    </source>
</evidence>
<evidence type="ECO:0000256" key="2">
    <source>
        <dbReference type="SAM" id="MobiDB-lite"/>
    </source>
</evidence>
<evidence type="ECO:0000305" key="3"/>